<reference key="1">
    <citation type="journal article" date="2005" name="Nucleic Acids Res.">
        <title>Genome dynamics and diversity of Shigella species, the etiologic agents of bacillary dysentery.</title>
        <authorList>
            <person name="Yang F."/>
            <person name="Yang J."/>
            <person name="Zhang X."/>
            <person name="Chen L."/>
            <person name="Jiang Y."/>
            <person name="Yan Y."/>
            <person name="Tang X."/>
            <person name="Wang J."/>
            <person name="Xiong Z."/>
            <person name="Dong J."/>
            <person name="Xue Y."/>
            <person name="Zhu Y."/>
            <person name="Xu X."/>
            <person name="Sun L."/>
            <person name="Chen S."/>
            <person name="Nie H."/>
            <person name="Peng J."/>
            <person name="Xu J."/>
            <person name="Wang Y."/>
            <person name="Yuan Z."/>
            <person name="Wen Y."/>
            <person name="Yao Z."/>
            <person name="Shen Y."/>
            <person name="Qiang B."/>
            <person name="Hou Y."/>
            <person name="Yu J."/>
            <person name="Jin Q."/>
        </authorList>
    </citation>
    <scope>NUCLEOTIDE SEQUENCE [LARGE SCALE GENOMIC DNA]</scope>
    <source>
        <strain>Ss046</strain>
    </source>
</reference>
<evidence type="ECO:0000255" key="1">
    <source>
        <dbReference type="HAMAP-Rule" id="MF_01636"/>
    </source>
</evidence>
<sequence>MDAMKYNDLRDFLTLLEQQGELKRITLPVDPHLEITEIADRTLRAGGPALLFENPKGYSMPVLCNLFGTPKRVAMGMGQEDVSALREVGKLLAFLKEPEPPKGFRDLFDKLPQFKQVLNMPTKRLRGAPCQQKIVSGDDVDLNRIPIMTCWPEDAAPLITWGLTVTRGPHKERQNLGIYRQQLIGKNKLIMRWLSHRGGALDYQEWCAAHPGERFPVSVALGADPATILGAVTPVPDTLSEYAFAGLLRGTKTEVVKCISNDLEVPASAEIVLEGYIEQGETAPEGPYGDHTGYYNEVDSFPVFTVTHITQREDAIYHSTYTGRPPDEPAVLGVALNEVFVPILQKQFPEIVDFYLPPEGCSYRLAVVTIKKQYAGHAKRVMMGVWSFLRQFMYTKFVIVCDDDVNARDWNDVIWAITTRMDPARDTVLVENTPIDYLDFASPVSGLGSKMGLDATNKWPGETQREWGRPIKKDPDVVAHIDAIWDELAIFNNGKSA</sequence>
<name>UBID_SHISS</name>
<comment type="function">
    <text evidence="1">Catalyzes the decarboxylation of 3-octaprenyl-4-hydroxy benzoate to 2-octaprenylphenol, an intermediate step in ubiquinone biosynthesis.</text>
</comment>
<comment type="catalytic activity">
    <reaction evidence="1">
        <text>a 4-hydroxy-3-(all-trans-polyprenyl)benzoate + H(+) = a 2-(all-trans-polyprenyl)phenol + CO2</text>
        <dbReference type="Rhea" id="RHEA:41680"/>
        <dbReference type="Rhea" id="RHEA-COMP:9514"/>
        <dbReference type="Rhea" id="RHEA-COMP:9516"/>
        <dbReference type="ChEBI" id="CHEBI:1269"/>
        <dbReference type="ChEBI" id="CHEBI:15378"/>
        <dbReference type="ChEBI" id="CHEBI:16526"/>
        <dbReference type="ChEBI" id="CHEBI:78396"/>
        <dbReference type="EC" id="4.1.1.98"/>
    </reaction>
</comment>
<comment type="cofactor">
    <cofactor evidence="1">
        <name>prenylated FMN</name>
        <dbReference type="ChEBI" id="CHEBI:87746"/>
    </cofactor>
    <text evidence="1">Binds 1 prenylated FMN per subunit.</text>
</comment>
<comment type="cofactor">
    <cofactor evidence="1">
        <name>Mn(2+)</name>
        <dbReference type="ChEBI" id="CHEBI:29035"/>
    </cofactor>
</comment>
<comment type="pathway">
    <text evidence="1">Cofactor biosynthesis; ubiquinone biosynthesis.</text>
</comment>
<comment type="subunit">
    <text evidence="1">Homohexamer.</text>
</comment>
<comment type="subcellular location">
    <subcellularLocation>
        <location evidence="1">Cell membrane</location>
        <topology evidence="1">Peripheral membrane protein</topology>
    </subcellularLocation>
</comment>
<comment type="similarity">
    <text evidence="1">Belongs to the UbiD family.</text>
</comment>
<protein>
    <recommendedName>
        <fullName evidence="1">3-octaprenyl-4-hydroxybenzoate carboxy-lyase</fullName>
        <ecNumber evidence="1">4.1.1.98</ecNumber>
    </recommendedName>
    <alternativeName>
        <fullName evidence="1">Polyprenyl p-hydroxybenzoate decarboxylase</fullName>
    </alternativeName>
</protein>
<accession>Q3YVC4</accession>
<keyword id="KW-1003">Cell membrane</keyword>
<keyword id="KW-0210">Decarboxylase</keyword>
<keyword id="KW-0285">Flavoprotein</keyword>
<keyword id="KW-0288">FMN</keyword>
<keyword id="KW-0456">Lyase</keyword>
<keyword id="KW-0464">Manganese</keyword>
<keyword id="KW-0472">Membrane</keyword>
<keyword id="KW-0479">Metal-binding</keyword>
<keyword id="KW-1185">Reference proteome</keyword>
<keyword id="KW-0831">Ubiquinone biosynthesis</keyword>
<feature type="chain" id="PRO_0000267702" description="3-octaprenyl-4-hydroxybenzoate carboxy-lyase">
    <location>
        <begin position="1"/>
        <end position="497"/>
    </location>
</feature>
<feature type="active site" description="Proton donor" evidence="1">
    <location>
        <position position="290"/>
    </location>
</feature>
<feature type="binding site" evidence="1">
    <location>
        <position position="175"/>
    </location>
    <ligand>
        <name>Mn(2+)</name>
        <dbReference type="ChEBI" id="CHEBI:29035"/>
    </ligand>
</feature>
<feature type="binding site" evidence="1">
    <location>
        <begin position="178"/>
        <end position="180"/>
    </location>
    <ligand>
        <name>prenylated FMN</name>
        <dbReference type="ChEBI" id="CHEBI:87746"/>
    </ligand>
</feature>
<feature type="binding site" evidence="1">
    <location>
        <begin position="192"/>
        <end position="194"/>
    </location>
    <ligand>
        <name>prenylated FMN</name>
        <dbReference type="ChEBI" id="CHEBI:87746"/>
    </ligand>
</feature>
<feature type="binding site" evidence="1">
    <location>
        <begin position="197"/>
        <end position="198"/>
    </location>
    <ligand>
        <name>prenylated FMN</name>
        <dbReference type="ChEBI" id="CHEBI:87746"/>
    </ligand>
</feature>
<feature type="binding site" evidence="1">
    <location>
        <position position="241"/>
    </location>
    <ligand>
        <name>Mn(2+)</name>
        <dbReference type="ChEBI" id="CHEBI:29035"/>
    </ligand>
</feature>
<dbReference type="EC" id="4.1.1.98" evidence="1"/>
<dbReference type="EMBL" id="CP000038">
    <property type="protein sequence ID" value="AAZ90538.1"/>
    <property type="molecule type" value="Genomic_DNA"/>
</dbReference>
<dbReference type="RefSeq" id="WP_000339804.1">
    <property type="nucleotide sequence ID" value="NC_007384.1"/>
</dbReference>
<dbReference type="SMR" id="Q3YVC4"/>
<dbReference type="GeneID" id="93778094"/>
<dbReference type="KEGG" id="ssn:SSON_4016"/>
<dbReference type="HOGENOM" id="CLU_023348_4_1_6"/>
<dbReference type="UniPathway" id="UPA00232"/>
<dbReference type="Proteomes" id="UP000002529">
    <property type="component" value="Chromosome"/>
</dbReference>
<dbReference type="GO" id="GO:0005829">
    <property type="term" value="C:cytosol"/>
    <property type="evidence" value="ECO:0007669"/>
    <property type="project" value="TreeGrafter"/>
</dbReference>
<dbReference type="GO" id="GO:0005886">
    <property type="term" value="C:plasma membrane"/>
    <property type="evidence" value="ECO:0007669"/>
    <property type="project" value="UniProtKB-SubCell"/>
</dbReference>
<dbReference type="GO" id="GO:0008694">
    <property type="term" value="F:3-octaprenyl-4-hydroxybenzoate carboxy-lyase activity"/>
    <property type="evidence" value="ECO:0007669"/>
    <property type="project" value="UniProtKB-UniRule"/>
</dbReference>
<dbReference type="GO" id="GO:0046872">
    <property type="term" value="F:metal ion binding"/>
    <property type="evidence" value="ECO:0007669"/>
    <property type="project" value="UniProtKB-KW"/>
</dbReference>
<dbReference type="GO" id="GO:0006744">
    <property type="term" value="P:ubiquinone biosynthetic process"/>
    <property type="evidence" value="ECO:0007669"/>
    <property type="project" value="UniProtKB-UniRule"/>
</dbReference>
<dbReference type="FunFam" id="1.20.5.570:FF:000001">
    <property type="entry name" value="3-octaprenyl-4-hydroxybenzoate carboxy-lyase"/>
    <property type="match status" value="1"/>
</dbReference>
<dbReference type="FunFam" id="3.40.1670.10:FF:000001">
    <property type="entry name" value="3-octaprenyl-4-hydroxybenzoate carboxy-lyase"/>
    <property type="match status" value="1"/>
</dbReference>
<dbReference type="Gene3D" id="1.20.5.570">
    <property type="entry name" value="Single helix bin"/>
    <property type="match status" value="1"/>
</dbReference>
<dbReference type="Gene3D" id="3.40.1670.10">
    <property type="entry name" value="UbiD C-terminal domain-like"/>
    <property type="match status" value="1"/>
</dbReference>
<dbReference type="HAMAP" id="MF_01636">
    <property type="entry name" value="UbiD"/>
    <property type="match status" value="1"/>
</dbReference>
<dbReference type="InterPro" id="IPR002830">
    <property type="entry name" value="UbiD"/>
</dbReference>
<dbReference type="InterPro" id="IPR049381">
    <property type="entry name" value="UbiD-like_C"/>
</dbReference>
<dbReference type="InterPro" id="IPR049383">
    <property type="entry name" value="UbiD-like_N"/>
</dbReference>
<dbReference type="InterPro" id="IPR023677">
    <property type="entry name" value="UbiD_bacteria"/>
</dbReference>
<dbReference type="InterPro" id="IPR048304">
    <property type="entry name" value="UbiD_Rift_dom"/>
</dbReference>
<dbReference type="NCBIfam" id="NF008175">
    <property type="entry name" value="PRK10922.1"/>
    <property type="match status" value="1"/>
</dbReference>
<dbReference type="NCBIfam" id="TIGR00148">
    <property type="entry name" value="UbiD family decarboxylase"/>
    <property type="match status" value="1"/>
</dbReference>
<dbReference type="PANTHER" id="PTHR30108">
    <property type="entry name" value="3-OCTAPRENYL-4-HYDROXYBENZOATE CARBOXY-LYASE-RELATED"/>
    <property type="match status" value="1"/>
</dbReference>
<dbReference type="PANTHER" id="PTHR30108:SF17">
    <property type="entry name" value="FERULIC ACID DECARBOXYLASE 1"/>
    <property type="match status" value="1"/>
</dbReference>
<dbReference type="Pfam" id="PF01977">
    <property type="entry name" value="UbiD"/>
    <property type="match status" value="1"/>
</dbReference>
<dbReference type="Pfam" id="PF20696">
    <property type="entry name" value="UbiD_C"/>
    <property type="match status" value="1"/>
</dbReference>
<dbReference type="Pfam" id="PF20695">
    <property type="entry name" value="UbiD_N"/>
    <property type="match status" value="1"/>
</dbReference>
<dbReference type="SUPFAM" id="SSF50475">
    <property type="entry name" value="FMN-binding split barrel"/>
    <property type="match status" value="1"/>
</dbReference>
<dbReference type="SUPFAM" id="SSF143968">
    <property type="entry name" value="UbiD C-terminal domain-like"/>
    <property type="match status" value="1"/>
</dbReference>
<proteinExistence type="inferred from homology"/>
<organism>
    <name type="scientific">Shigella sonnei (strain Ss046)</name>
    <dbReference type="NCBI Taxonomy" id="300269"/>
    <lineage>
        <taxon>Bacteria</taxon>
        <taxon>Pseudomonadati</taxon>
        <taxon>Pseudomonadota</taxon>
        <taxon>Gammaproteobacteria</taxon>
        <taxon>Enterobacterales</taxon>
        <taxon>Enterobacteriaceae</taxon>
        <taxon>Shigella</taxon>
    </lineage>
</organism>
<gene>
    <name evidence="1" type="primary">ubiD</name>
    <name type="ordered locus">SSON_4016</name>
</gene>